<keyword id="KW-0963">Cytoplasm</keyword>
<keyword id="KW-0570">Pentose shunt</keyword>
<keyword id="KW-1185">Reference proteome</keyword>
<keyword id="KW-0704">Schiff base</keyword>
<keyword id="KW-0808">Transferase</keyword>
<organism>
    <name type="scientific">Streptomyces coelicolor (strain ATCC BAA-471 / A3(2) / M145)</name>
    <dbReference type="NCBI Taxonomy" id="100226"/>
    <lineage>
        <taxon>Bacteria</taxon>
        <taxon>Bacillati</taxon>
        <taxon>Actinomycetota</taxon>
        <taxon>Actinomycetes</taxon>
        <taxon>Kitasatosporales</taxon>
        <taxon>Streptomycetaceae</taxon>
        <taxon>Streptomyces</taxon>
        <taxon>Streptomyces albidoflavus group</taxon>
    </lineage>
</organism>
<evidence type="ECO:0000255" key="1">
    <source>
        <dbReference type="HAMAP-Rule" id="MF_00493"/>
    </source>
</evidence>
<dbReference type="EC" id="2.2.1.2" evidence="1"/>
<dbReference type="EMBL" id="AL939110">
    <property type="protein sequence ID" value="CAB50761.1"/>
    <property type="molecule type" value="Genomic_DNA"/>
</dbReference>
<dbReference type="PIR" id="T36008">
    <property type="entry name" value="T36008"/>
</dbReference>
<dbReference type="RefSeq" id="NP_626201.1">
    <property type="nucleotide sequence ID" value="NC_003888.3"/>
</dbReference>
<dbReference type="SMR" id="Q9XAC0"/>
<dbReference type="FunCoup" id="Q9XAC0">
    <property type="interactions" value="210"/>
</dbReference>
<dbReference type="STRING" id="100226.gene:17759533"/>
<dbReference type="PaxDb" id="100226-SCO1936"/>
<dbReference type="KEGG" id="sco:SCO1936"/>
<dbReference type="PATRIC" id="fig|100226.15.peg.1963"/>
<dbReference type="eggNOG" id="COG0176">
    <property type="taxonomic scope" value="Bacteria"/>
</dbReference>
<dbReference type="HOGENOM" id="CLU_050771_1_0_11"/>
<dbReference type="InParanoid" id="Q9XAC0"/>
<dbReference type="OrthoDB" id="9809101at2"/>
<dbReference type="PhylomeDB" id="Q9XAC0"/>
<dbReference type="UniPathway" id="UPA00115">
    <property type="reaction ID" value="UER00414"/>
</dbReference>
<dbReference type="Proteomes" id="UP000001973">
    <property type="component" value="Chromosome"/>
</dbReference>
<dbReference type="GO" id="GO:0005737">
    <property type="term" value="C:cytoplasm"/>
    <property type="evidence" value="ECO:0007669"/>
    <property type="project" value="UniProtKB-SubCell"/>
</dbReference>
<dbReference type="GO" id="GO:0004801">
    <property type="term" value="F:transaldolase activity"/>
    <property type="evidence" value="ECO:0007669"/>
    <property type="project" value="UniProtKB-UniRule"/>
</dbReference>
<dbReference type="GO" id="GO:0005975">
    <property type="term" value="P:carbohydrate metabolic process"/>
    <property type="evidence" value="ECO:0007669"/>
    <property type="project" value="InterPro"/>
</dbReference>
<dbReference type="GO" id="GO:0006098">
    <property type="term" value="P:pentose-phosphate shunt"/>
    <property type="evidence" value="ECO:0007669"/>
    <property type="project" value="UniProtKB-UniRule"/>
</dbReference>
<dbReference type="CDD" id="cd00955">
    <property type="entry name" value="Transaldolase_like"/>
    <property type="match status" value="1"/>
</dbReference>
<dbReference type="Gene3D" id="3.20.20.70">
    <property type="entry name" value="Aldolase class I"/>
    <property type="match status" value="1"/>
</dbReference>
<dbReference type="HAMAP" id="MF_00493">
    <property type="entry name" value="Transaldolase_2"/>
    <property type="match status" value="1"/>
</dbReference>
<dbReference type="InterPro" id="IPR013785">
    <property type="entry name" value="Aldolase_TIM"/>
</dbReference>
<dbReference type="InterPro" id="IPR001585">
    <property type="entry name" value="TAL/FSA"/>
</dbReference>
<dbReference type="InterPro" id="IPR004732">
    <property type="entry name" value="Transaldolase_2"/>
</dbReference>
<dbReference type="InterPro" id="IPR018225">
    <property type="entry name" value="Transaldolase_AS"/>
</dbReference>
<dbReference type="NCBIfam" id="NF002881">
    <property type="entry name" value="PRK03343.1"/>
    <property type="match status" value="1"/>
</dbReference>
<dbReference type="NCBIfam" id="TIGR00876">
    <property type="entry name" value="tal_mycobact"/>
    <property type="match status" value="1"/>
</dbReference>
<dbReference type="PANTHER" id="PTHR10683">
    <property type="entry name" value="TRANSALDOLASE"/>
    <property type="match status" value="1"/>
</dbReference>
<dbReference type="PANTHER" id="PTHR10683:SF31">
    <property type="entry name" value="TRANSALDOLASE"/>
    <property type="match status" value="1"/>
</dbReference>
<dbReference type="Pfam" id="PF00923">
    <property type="entry name" value="TAL_FSA"/>
    <property type="match status" value="1"/>
</dbReference>
<dbReference type="PIRSF" id="PIRSF036915">
    <property type="entry name" value="Trnald_Bac_Plnt"/>
    <property type="match status" value="1"/>
</dbReference>
<dbReference type="SUPFAM" id="SSF51569">
    <property type="entry name" value="Aldolase"/>
    <property type="match status" value="1"/>
</dbReference>
<dbReference type="PROSITE" id="PS01054">
    <property type="entry name" value="TRANSALDOLASE_1"/>
    <property type="match status" value="1"/>
</dbReference>
<sequence length="372" mass="40588">MTDALKRLSDEGVAIWLDDLSRKRITSGNLAELIDQQHVVGVTTNPSIFQKAISQGDGYDQQLADLAVRGVTVEEAIRMITTADVRDAADILRPVYDNTGGKDGRVSIEVDPRLAHNTHATVAEAKQLAWLVDRPNTFIKIPATEAGLPAIAETIGLGISVNVTLIFSLERYRKVMDAFLTGLEKAKERGLDLSQIHSVASFFVSRVDTEIDKRIDALGTDEAKAQRGKAAVANARLAYQAYEEVFGTDRWAALEKAGANKQRPLWASTGVKDKAYSDTMYVTDLVAPNTVNTMPEATLLATEDHGEITGDAVAGSYERARADLDAIEKLGISYDEVVQLLEKEGVDKFEDAWNDLLKSTEAELKRLAPSKG</sequence>
<accession>Q9XAC0</accession>
<proteinExistence type="inferred from homology"/>
<protein>
    <recommendedName>
        <fullName evidence="1">Transaldolase 2</fullName>
        <ecNumber evidence="1">2.2.1.2</ecNumber>
    </recommendedName>
</protein>
<reference key="1">
    <citation type="journal article" date="2002" name="Nature">
        <title>Complete genome sequence of the model actinomycete Streptomyces coelicolor A3(2).</title>
        <authorList>
            <person name="Bentley S.D."/>
            <person name="Chater K.F."/>
            <person name="Cerdeno-Tarraga A.-M."/>
            <person name="Challis G.L."/>
            <person name="Thomson N.R."/>
            <person name="James K.D."/>
            <person name="Harris D.E."/>
            <person name="Quail M.A."/>
            <person name="Kieser H."/>
            <person name="Harper D."/>
            <person name="Bateman A."/>
            <person name="Brown S."/>
            <person name="Chandra G."/>
            <person name="Chen C.W."/>
            <person name="Collins M."/>
            <person name="Cronin A."/>
            <person name="Fraser A."/>
            <person name="Goble A."/>
            <person name="Hidalgo J."/>
            <person name="Hornsby T."/>
            <person name="Howarth S."/>
            <person name="Huang C.-H."/>
            <person name="Kieser T."/>
            <person name="Larke L."/>
            <person name="Murphy L.D."/>
            <person name="Oliver K."/>
            <person name="O'Neil S."/>
            <person name="Rabbinowitsch E."/>
            <person name="Rajandream M.A."/>
            <person name="Rutherford K.M."/>
            <person name="Rutter S."/>
            <person name="Seeger K."/>
            <person name="Saunders D."/>
            <person name="Sharp S."/>
            <person name="Squares R."/>
            <person name="Squares S."/>
            <person name="Taylor K."/>
            <person name="Warren T."/>
            <person name="Wietzorrek A."/>
            <person name="Woodward J.R."/>
            <person name="Barrell B.G."/>
            <person name="Parkhill J."/>
            <person name="Hopwood D.A."/>
        </authorList>
    </citation>
    <scope>NUCLEOTIDE SEQUENCE [LARGE SCALE GENOMIC DNA]</scope>
    <source>
        <strain>ATCC BAA-471 / A3(2) / M145</strain>
    </source>
</reference>
<name>TAL2_STRCO</name>
<gene>
    <name evidence="1" type="primary">tal2</name>
    <name type="ordered locus">SCO1936</name>
    <name type="ORF">SCC22.18</name>
</gene>
<feature type="chain" id="PRO_0000173642" description="Transaldolase 2">
    <location>
        <begin position="1"/>
        <end position="372"/>
    </location>
</feature>
<feature type="active site" description="Schiff-base intermediate with substrate" evidence="1">
    <location>
        <position position="140"/>
    </location>
</feature>
<comment type="function">
    <text evidence="1">Transaldolase is important for the balance of metabolites in the pentose-phosphate pathway.</text>
</comment>
<comment type="catalytic activity">
    <reaction evidence="1">
        <text>D-sedoheptulose 7-phosphate + D-glyceraldehyde 3-phosphate = D-erythrose 4-phosphate + beta-D-fructose 6-phosphate</text>
        <dbReference type="Rhea" id="RHEA:17053"/>
        <dbReference type="ChEBI" id="CHEBI:16897"/>
        <dbReference type="ChEBI" id="CHEBI:57483"/>
        <dbReference type="ChEBI" id="CHEBI:57634"/>
        <dbReference type="ChEBI" id="CHEBI:59776"/>
        <dbReference type="EC" id="2.2.1.2"/>
    </reaction>
</comment>
<comment type="pathway">
    <text evidence="1">Carbohydrate degradation; pentose phosphate pathway; D-glyceraldehyde 3-phosphate and beta-D-fructose 6-phosphate from D-ribose 5-phosphate and D-xylulose 5-phosphate (non-oxidative stage): step 2/3.</text>
</comment>
<comment type="subcellular location">
    <subcellularLocation>
        <location evidence="1">Cytoplasm</location>
    </subcellularLocation>
</comment>
<comment type="similarity">
    <text evidence="1">Belongs to the transaldolase family. Type 2 subfamily.</text>
</comment>